<dbReference type="EC" id="1.11.1.21" evidence="1"/>
<dbReference type="EMBL" id="CP000511">
    <property type="protein sequence ID" value="ABM14009.1"/>
    <property type="molecule type" value="Genomic_DNA"/>
</dbReference>
<dbReference type="RefSeq" id="WP_011780414.1">
    <property type="nucleotide sequence ID" value="NC_008726.1"/>
</dbReference>
<dbReference type="SMR" id="A1TA09"/>
<dbReference type="STRING" id="350058.Mvan_3208"/>
<dbReference type="PeroxiBase" id="3576">
    <property type="entry name" value="MvaCP02_PYR1"/>
</dbReference>
<dbReference type="KEGG" id="mva:Mvan_3208"/>
<dbReference type="eggNOG" id="COG0376">
    <property type="taxonomic scope" value="Bacteria"/>
</dbReference>
<dbReference type="HOGENOM" id="CLU_025424_2_0_11"/>
<dbReference type="Proteomes" id="UP000009159">
    <property type="component" value="Chromosome"/>
</dbReference>
<dbReference type="GO" id="GO:0005829">
    <property type="term" value="C:cytosol"/>
    <property type="evidence" value="ECO:0007669"/>
    <property type="project" value="TreeGrafter"/>
</dbReference>
<dbReference type="GO" id="GO:0004096">
    <property type="term" value="F:catalase activity"/>
    <property type="evidence" value="ECO:0007669"/>
    <property type="project" value="UniProtKB-UniRule"/>
</dbReference>
<dbReference type="GO" id="GO:0020037">
    <property type="term" value="F:heme binding"/>
    <property type="evidence" value="ECO:0007669"/>
    <property type="project" value="InterPro"/>
</dbReference>
<dbReference type="GO" id="GO:0046872">
    <property type="term" value="F:metal ion binding"/>
    <property type="evidence" value="ECO:0007669"/>
    <property type="project" value="UniProtKB-KW"/>
</dbReference>
<dbReference type="GO" id="GO:0070301">
    <property type="term" value="P:cellular response to hydrogen peroxide"/>
    <property type="evidence" value="ECO:0007669"/>
    <property type="project" value="TreeGrafter"/>
</dbReference>
<dbReference type="GO" id="GO:0042744">
    <property type="term" value="P:hydrogen peroxide catabolic process"/>
    <property type="evidence" value="ECO:0007669"/>
    <property type="project" value="UniProtKB-KW"/>
</dbReference>
<dbReference type="CDD" id="cd08200">
    <property type="entry name" value="catalase_peroxidase_2"/>
    <property type="match status" value="1"/>
</dbReference>
<dbReference type="FunFam" id="1.10.420.10:FF:000004">
    <property type="entry name" value="Catalase-peroxidase"/>
    <property type="match status" value="1"/>
</dbReference>
<dbReference type="FunFam" id="1.10.520.10:FF:000002">
    <property type="entry name" value="Catalase-peroxidase"/>
    <property type="match status" value="1"/>
</dbReference>
<dbReference type="Gene3D" id="1.10.520.10">
    <property type="match status" value="2"/>
</dbReference>
<dbReference type="Gene3D" id="1.10.420.10">
    <property type="entry name" value="Peroxidase, domain 2"/>
    <property type="match status" value="2"/>
</dbReference>
<dbReference type="HAMAP" id="MF_01961">
    <property type="entry name" value="Catal_peroxid"/>
    <property type="match status" value="1"/>
</dbReference>
<dbReference type="InterPro" id="IPR000763">
    <property type="entry name" value="Catalase_peroxidase"/>
</dbReference>
<dbReference type="InterPro" id="IPR002016">
    <property type="entry name" value="Haem_peroxidase"/>
</dbReference>
<dbReference type="InterPro" id="IPR010255">
    <property type="entry name" value="Haem_peroxidase_sf"/>
</dbReference>
<dbReference type="InterPro" id="IPR019794">
    <property type="entry name" value="Peroxidases_AS"/>
</dbReference>
<dbReference type="InterPro" id="IPR019793">
    <property type="entry name" value="Peroxidases_heam-ligand_BS"/>
</dbReference>
<dbReference type="NCBIfam" id="TIGR00198">
    <property type="entry name" value="cat_per_HPI"/>
    <property type="match status" value="1"/>
</dbReference>
<dbReference type="NCBIfam" id="NF011635">
    <property type="entry name" value="PRK15061.1"/>
    <property type="match status" value="1"/>
</dbReference>
<dbReference type="PANTHER" id="PTHR30555:SF0">
    <property type="entry name" value="CATALASE-PEROXIDASE"/>
    <property type="match status" value="1"/>
</dbReference>
<dbReference type="PANTHER" id="PTHR30555">
    <property type="entry name" value="HYDROPEROXIDASE I, BIFUNCTIONAL CATALASE-PEROXIDASE"/>
    <property type="match status" value="1"/>
</dbReference>
<dbReference type="Pfam" id="PF00141">
    <property type="entry name" value="peroxidase"/>
    <property type="match status" value="2"/>
</dbReference>
<dbReference type="PRINTS" id="PR00460">
    <property type="entry name" value="BPEROXIDASE"/>
</dbReference>
<dbReference type="PRINTS" id="PR00458">
    <property type="entry name" value="PEROXIDASE"/>
</dbReference>
<dbReference type="SUPFAM" id="SSF48113">
    <property type="entry name" value="Heme-dependent peroxidases"/>
    <property type="match status" value="2"/>
</dbReference>
<dbReference type="PROSITE" id="PS00435">
    <property type="entry name" value="PEROXIDASE_1"/>
    <property type="match status" value="1"/>
</dbReference>
<dbReference type="PROSITE" id="PS00436">
    <property type="entry name" value="PEROXIDASE_2"/>
    <property type="match status" value="1"/>
</dbReference>
<dbReference type="PROSITE" id="PS50873">
    <property type="entry name" value="PEROXIDASE_4"/>
    <property type="match status" value="2"/>
</dbReference>
<comment type="function">
    <text evidence="1">Bifunctional enzyme with both catalase and broad-spectrum peroxidase activity.</text>
</comment>
<comment type="catalytic activity">
    <reaction evidence="1">
        <text>H2O2 + AH2 = A + 2 H2O</text>
        <dbReference type="Rhea" id="RHEA:30275"/>
        <dbReference type="ChEBI" id="CHEBI:13193"/>
        <dbReference type="ChEBI" id="CHEBI:15377"/>
        <dbReference type="ChEBI" id="CHEBI:16240"/>
        <dbReference type="ChEBI" id="CHEBI:17499"/>
        <dbReference type="EC" id="1.11.1.21"/>
    </reaction>
</comment>
<comment type="catalytic activity">
    <reaction evidence="1">
        <text>2 H2O2 = O2 + 2 H2O</text>
        <dbReference type="Rhea" id="RHEA:20309"/>
        <dbReference type="ChEBI" id="CHEBI:15377"/>
        <dbReference type="ChEBI" id="CHEBI:15379"/>
        <dbReference type="ChEBI" id="CHEBI:16240"/>
        <dbReference type="EC" id="1.11.1.21"/>
    </reaction>
</comment>
<comment type="cofactor">
    <cofactor evidence="1">
        <name>heme b</name>
        <dbReference type="ChEBI" id="CHEBI:60344"/>
    </cofactor>
    <text evidence="1">Binds 1 heme b (iron(II)-protoporphyrin IX) group per dimer.</text>
</comment>
<comment type="subunit">
    <text evidence="1">Homodimer or homotetramer.</text>
</comment>
<comment type="PTM">
    <text evidence="1">Formation of the three residue Trp-Tyr-Met cross-link is important for the catalase, but not the peroxidase activity of the enzyme.</text>
</comment>
<comment type="similarity">
    <text evidence="1">Belongs to the peroxidase family. Peroxidase/catalase subfamily.</text>
</comment>
<gene>
    <name evidence="1" type="primary">katG1</name>
    <name type="ordered locus">Mvan_3208</name>
</gene>
<evidence type="ECO:0000255" key="1">
    <source>
        <dbReference type="HAMAP-Rule" id="MF_01961"/>
    </source>
</evidence>
<evidence type="ECO:0000256" key="2">
    <source>
        <dbReference type="SAM" id="MobiDB-lite"/>
    </source>
</evidence>
<keyword id="KW-0349">Heme</keyword>
<keyword id="KW-0376">Hydrogen peroxide</keyword>
<keyword id="KW-0408">Iron</keyword>
<keyword id="KW-0479">Metal-binding</keyword>
<keyword id="KW-0560">Oxidoreductase</keyword>
<keyword id="KW-0575">Peroxidase</keyword>
<proteinExistence type="inferred from homology"/>
<organism>
    <name type="scientific">Mycolicibacterium vanbaalenii (strain DSM 7251 / JCM 13017 / BCRC 16820 / KCTC 9966 / NRRL B-24157 / PYR-1)</name>
    <name type="common">Mycobacterium vanbaalenii</name>
    <dbReference type="NCBI Taxonomy" id="350058"/>
    <lineage>
        <taxon>Bacteria</taxon>
        <taxon>Bacillati</taxon>
        <taxon>Actinomycetota</taxon>
        <taxon>Actinomycetes</taxon>
        <taxon>Mycobacteriales</taxon>
        <taxon>Mycobacteriaceae</taxon>
        <taxon>Mycolicibacterium</taxon>
    </lineage>
</organism>
<protein>
    <recommendedName>
        <fullName evidence="1">Catalase-peroxidase 1</fullName>
        <shortName evidence="1">CP 1</shortName>
        <ecNumber evidence="1">1.11.1.21</ecNumber>
    </recommendedName>
    <alternativeName>
        <fullName evidence="1">Peroxidase/catalase 1</fullName>
    </alternativeName>
</protein>
<sequence length="747" mass="82208">MTDTSDARPPHSDDKTRSHSESENPAIDSPEPKVHAPLTNKDWWPEQVDVSVLHKQNEKGNPLGEDFDYATEFAKLDVEAFKRDVIDLINTSQDWWPADYGSYAGLFIRMSWHAAGTYRIFDGRGGAGQGSQRFAPLNSWPDNANLDKARRLLWPIKRKYGNKISWADLIAYAGNAALESAGFQTFGFAFGREDIWEPEEMLWGQEDTWLGTDKRYGGTNDSDTRELAEPFGATTMGLIYVNPEGPEGKPDPLAAAHDIRETFGRMAMNDEETAALIVGGHTLGKTHGAADVNVGPEPEGAPIEQQGLGWKCPFGTGNAGDTVTSGLEVVWTTTPTKWSNAYLELLYGYEWELTKSPGGAWQFEAKDAEAIIPDPFGGPPRKPTMLVTDVSMRVDPIYGPITRRWLDHPEEMNEAFAKAWYKLMHRDMGPVSRYLGPWVAEPQLWQDPVPAVDHELIDESDIAALKAAVLQSGLSVPQLVKTAWASASSFRGTDKRGGANGARLRLEPQRSWEANEPSELDKVLPVLERIQQDFNASATGGKKVSLADLIVLAGSAAVEKAAKDGGYEISVHFAPGRTDASQEQTDVDSFAVLEPRADGFRNFARPGEKTPLEQLLVDKAYFLDLTAPEMTALIGGLRTLNANHGGSKHGVFTERPGVLSNDFFVNLLDMGTEWKPSELTENVYDGKDRATGQPKWTATAADLVFGSNSVLRAVVEVYAQDDNQGKFVEDFVAAWVKVMNNDRFDLG</sequence>
<feature type="chain" id="PRO_0000354847" description="Catalase-peroxidase 1">
    <location>
        <begin position="1"/>
        <end position="747"/>
    </location>
</feature>
<feature type="region of interest" description="Disordered" evidence="2">
    <location>
        <begin position="1"/>
        <end position="39"/>
    </location>
</feature>
<feature type="compositionally biased region" description="Basic and acidic residues" evidence="2">
    <location>
        <begin position="1"/>
        <end position="22"/>
    </location>
</feature>
<feature type="active site" description="Proton acceptor" evidence="1">
    <location>
        <position position="113"/>
    </location>
</feature>
<feature type="binding site" description="axial binding residue" evidence="1">
    <location>
        <position position="281"/>
    </location>
    <ligand>
        <name>heme b</name>
        <dbReference type="ChEBI" id="CHEBI:60344"/>
    </ligand>
    <ligandPart>
        <name>Fe</name>
        <dbReference type="ChEBI" id="CHEBI:18248"/>
    </ligandPart>
</feature>
<feature type="site" description="Transition state stabilizer" evidence="1">
    <location>
        <position position="109"/>
    </location>
</feature>
<feature type="cross-link" description="Tryptophyl-tyrosyl-methioninium (Trp-Tyr) (with M-266)" evidence="1">
    <location>
        <begin position="112"/>
        <end position="240"/>
    </location>
</feature>
<feature type="cross-link" description="Tryptophyl-tyrosyl-methioninium (Tyr-Met) (with W-112)" evidence="1">
    <location>
        <begin position="240"/>
        <end position="266"/>
    </location>
</feature>
<name>KATG1_MYCVP</name>
<accession>A1TA09</accession>
<reference key="1">
    <citation type="submission" date="2006-12" db="EMBL/GenBank/DDBJ databases">
        <title>Complete sequence of Mycobacterium vanbaalenii PYR-1.</title>
        <authorList>
            <consortium name="US DOE Joint Genome Institute"/>
            <person name="Copeland A."/>
            <person name="Lucas S."/>
            <person name="Lapidus A."/>
            <person name="Barry K."/>
            <person name="Detter J.C."/>
            <person name="Glavina del Rio T."/>
            <person name="Hammon N."/>
            <person name="Israni S."/>
            <person name="Dalin E."/>
            <person name="Tice H."/>
            <person name="Pitluck S."/>
            <person name="Singan V."/>
            <person name="Schmutz J."/>
            <person name="Larimer F."/>
            <person name="Land M."/>
            <person name="Hauser L."/>
            <person name="Kyrpides N."/>
            <person name="Anderson I.J."/>
            <person name="Miller C."/>
            <person name="Richardson P."/>
        </authorList>
    </citation>
    <scope>NUCLEOTIDE SEQUENCE [LARGE SCALE GENOMIC DNA]</scope>
    <source>
        <strain>DSM 7251 / JCM 13017 / BCRC 16820 / KCTC 9966 / NRRL B-24157 / PYR-1</strain>
    </source>
</reference>